<comment type="function">
    <text evidence="1">Part of the twin-arginine translocation (Tat) system that transports large folded proteins containing a characteristic twin-arginine motif in their signal peptide across membranes. TatA could form the protein-conducting channel of the Tat system.</text>
</comment>
<comment type="subunit">
    <text evidence="1">The Tat system comprises two distinct complexes: a TatABC complex, containing multiple copies of TatA, TatB and TatC subunits, and a separate TatA complex, containing only TatA subunits. Substrates initially bind to the TatABC complex, which probably triggers association of the separate TatA complex to form the active translocon.</text>
</comment>
<comment type="subcellular location">
    <subcellularLocation>
        <location evidence="1">Cell membrane</location>
        <topology evidence="1">Single-pass membrane protein</topology>
    </subcellularLocation>
</comment>
<comment type="similarity">
    <text evidence="1">Belongs to the TatA/E family.</text>
</comment>
<reference key="1">
    <citation type="journal article" date="2004" name="PLoS Biol.">
        <title>Phylogenomics of the reproductive parasite Wolbachia pipientis wMel: a streamlined genome overrun by mobile genetic elements.</title>
        <authorList>
            <person name="Wu M."/>
            <person name="Sun L.V."/>
            <person name="Vamathevan J.J."/>
            <person name="Riegler M."/>
            <person name="DeBoy R.T."/>
            <person name="Brownlie J.C."/>
            <person name="McGraw E.A."/>
            <person name="Martin W."/>
            <person name="Esser C."/>
            <person name="Ahmadinejad N."/>
            <person name="Wiegand C."/>
            <person name="Madupu R."/>
            <person name="Beanan M.J."/>
            <person name="Brinkac L.M."/>
            <person name="Daugherty S.C."/>
            <person name="Durkin A.S."/>
            <person name="Kolonay J.F."/>
            <person name="Nelson W.C."/>
            <person name="Mohamoud Y."/>
            <person name="Lee P."/>
            <person name="Berry K.J."/>
            <person name="Young M.B."/>
            <person name="Utterback T.R."/>
            <person name="Weidman J.F."/>
            <person name="Nierman W.C."/>
            <person name="Paulsen I.T."/>
            <person name="Nelson K.E."/>
            <person name="Tettelin H."/>
            <person name="O'Neill S.L."/>
            <person name="Eisen J.A."/>
        </authorList>
    </citation>
    <scope>NUCLEOTIDE SEQUENCE [LARGE SCALE GENOMIC DNA]</scope>
</reference>
<keyword id="KW-1003">Cell membrane</keyword>
<keyword id="KW-0472">Membrane</keyword>
<keyword id="KW-0653">Protein transport</keyword>
<keyword id="KW-0811">Translocation</keyword>
<keyword id="KW-0812">Transmembrane</keyword>
<keyword id="KW-1133">Transmembrane helix</keyword>
<keyword id="KW-0813">Transport</keyword>
<dbReference type="EMBL" id="AE017196">
    <property type="protein sequence ID" value="AAS13904.1"/>
    <property type="molecule type" value="Genomic_DNA"/>
</dbReference>
<dbReference type="RefSeq" id="WP_006013840.1">
    <property type="nucleotide sequence ID" value="NZ_OX384529.1"/>
</dbReference>
<dbReference type="SMR" id="Q73IK8"/>
<dbReference type="EnsemblBacteria" id="AAS13904">
    <property type="protein sequence ID" value="AAS13904"/>
    <property type="gene ID" value="WD_0152"/>
</dbReference>
<dbReference type="KEGG" id="wol:WD_0152"/>
<dbReference type="eggNOG" id="COG1826">
    <property type="taxonomic scope" value="Bacteria"/>
</dbReference>
<dbReference type="Proteomes" id="UP000008215">
    <property type="component" value="Chromosome"/>
</dbReference>
<dbReference type="GO" id="GO:0033281">
    <property type="term" value="C:TAT protein transport complex"/>
    <property type="evidence" value="ECO:0007669"/>
    <property type="project" value="UniProtKB-UniRule"/>
</dbReference>
<dbReference type="GO" id="GO:0008320">
    <property type="term" value="F:protein transmembrane transporter activity"/>
    <property type="evidence" value="ECO:0007669"/>
    <property type="project" value="UniProtKB-UniRule"/>
</dbReference>
<dbReference type="GO" id="GO:0043953">
    <property type="term" value="P:protein transport by the Tat complex"/>
    <property type="evidence" value="ECO:0007669"/>
    <property type="project" value="UniProtKB-UniRule"/>
</dbReference>
<dbReference type="Gene3D" id="1.20.5.3310">
    <property type="match status" value="1"/>
</dbReference>
<dbReference type="HAMAP" id="MF_00236">
    <property type="entry name" value="TatA_E"/>
    <property type="match status" value="1"/>
</dbReference>
<dbReference type="InterPro" id="IPR003369">
    <property type="entry name" value="TatA/B/E"/>
</dbReference>
<dbReference type="InterPro" id="IPR006312">
    <property type="entry name" value="TatA/E"/>
</dbReference>
<dbReference type="NCBIfam" id="TIGR01411">
    <property type="entry name" value="tatAE"/>
    <property type="match status" value="1"/>
</dbReference>
<dbReference type="PANTHER" id="PTHR42982">
    <property type="entry name" value="SEC-INDEPENDENT PROTEIN TRANSLOCASE PROTEIN TATA"/>
    <property type="match status" value="1"/>
</dbReference>
<dbReference type="PANTHER" id="PTHR42982:SF1">
    <property type="entry name" value="SEC-INDEPENDENT PROTEIN TRANSLOCASE PROTEIN TATA"/>
    <property type="match status" value="1"/>
</dbReference>
<dbReference type="Pfam" id="PF02416">
    <property type="entry name" value="TatA_B_E"/>
    <property type="match status" value="1"/>
</dbReference>
<sequence>MSLGPWQLFLVLIIILVLFGAGRLPQVMGDLGKGIKNLKQELKDSEKLSSNEPDR</sequence>
<evidence type="ECO:0000255" key="1">
    <source>
        <dbReference type="HAMAP-Rule" id="MF_00236"/>
    </source>
</evidence>
<feature type="chain" id="PRO_1000197915" description="Sec-independent protein translocase protein TatA">
    <location>
        <begin position="1"/>
        <end position="55"/>
    </location>
</feature>
<feature type="transmembrane region" description="Helical" evidence="1">
    <location>
        <begin position="1"/>
        <end position="21"/>
    </location>
</feature>
<protein>
    <recommendedName>
        <fullName evidence="1">Sec-independent protein translocase protein TatA</fullName>
    </recommendedName>
</protein>
<accession>Q73IK8</accession>
<proteinExistence type="inferred from homology"/>
<gene>
    <name evidence="1" type="primary">tatA</name>
    <name type="ordered locus">WD_0152</name>
</gene>
<name>TATA_WOLPM</name>
<organism>
    <name type="scientific">Wolbachia pipientis wMel</name>
    <dbReference type="NCBI Taxonomy" id="163164"/>
    <lineage>
        <taxon>Bacteria</taxon>
        <taxon>Pseudomonadati</taxon>
        <taxon>Pseudomonadota</taxon>
        <taxon>Alphaproteobacteria</taxon>
        <taxon>Rickettsiales</taxon>
        <taxon>Anaplasmataceae</taxon>
        <taxon>Wolbachieae</taxon>
        <taxon>Wolbachia</taxon>
    </lineage>
</organism>